<feature type="chain" id="PRO_1000082049" description="Succinate--CoA ligase [ADP-forming] subunit beta">
    <location>
        <begin position="1"/>
        <end position="389"/>
    </location>
</feature>
<feature type="domain" description="ATP-grasp" evidence="1">
    <location>
        <begin position="9"/>
        <end position="244"/>
    </location>
</feature>
<feature type="binding site" evidence="1">
    <location>
        <position position="46"/>
    </location>
    <ligand>
        <name>ATP</name>
        <dbReference type="ChEBI" id="CHEBI:30616"/>
    </ligand>
</feature>
<feature type="binding site" evidence="1">
    <location>
        <begin position="53"/>
        <end position="55"/>
    </location>
    <ligand>
        <name>ATP</name>
        <dbReference type="ChEBI" id="CHEBI:30616"/>
    </ligand>
</feature>
<feature type="binding site" evidence="1">
    <location>
        <position position="99"/>
    </location>
    <ligand>
        <name>ATP</name>
        <dbReference type="ChEBI" id="CHEBI:30616"/>
    </ligand>
</feature>
<feature type="binding site" evidence="1">
    <location>
        <position position="102"/>
    </location>
    <ligand>
        <name>ATP</name>
        <dbReference type="ChEBI" id="CHEBI:30616"/>
    </ligand>
</feature>
<feature type="binding site" evidence="1">
    <location>
        <position position="107"/>
    </location>
    <ligand>
        <name>ATP</name>
        <dbReference type="ChEBI" id="CHEBI:30616"/>
    </ligand>
</feature>
<feature type="binding site" evidence="1">
    <location>
        <position position="199"/>
    </location>
    <ligand>
        <name>Mg(2+)</name>
        <dbReference type="ChEBI" id="CHEBI:18420"/>
    </ligand>
</feature>
<feature type="binding site" evidence="1">
    <location>
        <position position="213"/>
    </location>
    <ligand>
        <name>Mg(2+)</name>
        <dbReference type="ChEBI" id="CHEBI:18420"/>
    </ligand>
</feature>
<feature type="binding site" evidence="1">
    <location>
        <position position="264"/>
    </location>
    <ligand>
        <name>substrate</name>
        <note>ligand shared with subunit alpha</note>
    </ligand>
</feature>
<feature type="binding site" evidence="1">
    <location>
        <begin position="321"/>
        <end position="323"/>
    </location>
    <ligand>
        <name>substrate</name>
        <note>ligand shared with subunit alpha</note>
    </ligand>
</feature>
<gene>
    <name evidence="1" type="primary">sucC</name>
    <name type="ordered locus">Bxeno_A3722</name>
    <name type="ORF">Bxe_A0674</name>
</gene>
<comment type="function">
    <text evidence="1">Succinyl-CoA synthetase functions in the citric acid cycle (TCA), coupling the hydrolysis of succinyl-CoA to the synthesis of either ATP or GTP and thus represents the only step of substrate-level phosphorylation in the TCA. The beta subunit provides nucleotide specificity of the enzyme and binds the substrate succinate, while the binding sites for coenzyme A and phosphate are found in the alpha subunit.</text>
</comment>
<comment type="catalytic activity">
    <reaction evidence="1">
        <text>succinate + ATP + CoA = succinyl-CoA + ADP + phosphate</text>
        <dbReference type="Rhea" id="RHEA:17661"/>
        <dbReference type="ChEBI" id="CHEBI:30031"/>
        <dbReference type="ChEBI" id="CHEBI:30616"/>
        <dbReference type="ChEBI" id="CHEBI:43474"/>
        <dbReference type="ChEBI" id="CHEBI:57287"/>
        <dbReference type="ChEBI" id="CHEBI:57292"/>
        <dbReference type="ChEBI" id="CHEBI:456216"/>
        <dbReference type="EC" id="6.2.1.5"/>
    </reaction>
    <physiologicalReaction direction="right-to-left" evidence="1">
        <dbReference type="Rhea" id="RHEA:17663"/>
    </physiologicalReaction>
</comment>
<comment type="catalytic activity">
    <reaction evidence="1">
        <text>GTP + succinate + CoA = succinyl-CoA + GDP + phosphate</text>
        <dbReference type="Rhea" id="RHEA:22120"/>
        <dbReference type="ChEBI" id="CHEBI:30031"/>
        <dbReference type="ChEBI" id="CHEBI:37565"/>
        <dbReference type="ChEBI" id="CHEBI:43474"/>
        <dbReference type="ChEBI" id="CHEBI:57287"/>
        <dbReference type="ChEBI" id="CHEBI:57292"/>
        <dbReference type="ChEBI" id="CHEBI:58189"/>
    </reaction>
    <physiologicalReaction direction="right-to-left" evidence="1">
        <dbReference type="Rhea" id="RHEA:22122"/>
    </physiologicalReaction>
</comment>
<comment type="cofactor">
    <cofactor evidence="1">
        <name>Mg(2+)</name>
        <dbReference type="ChEBI" id="CHEBI:18420"/>
    </cofactor>
    <text evidence="1">Binds 1 Mg(2+) ion per subunit.</text>
</comment>
<comment type="pathway">
    <text evidence="1">Carbohydrate metabolism; tricarboxylic acid cycle; succinate from succinyl-CoA (ligase route): step 1/1.</text>
</comment>
<comment type="subunit">
    <text evidence="1">Heterotetramer of two alpha and two beta subunits.</text>
</comment>
<comment type="similarity">
    <text evidence="1">Belongs to the succinate/malate CoA ligase beta subunit family.</text>
</comment>
<protein>
    <recommendedName>
        <fullName evidence="1">Succinate--CoA ligase [ADP-forming] subunit beta</fullName>
        <ecNumber evidence="1">6.2.1.5</ecNumber>
    </recommendedName>
    <alternativeName>
        <fullName evidence="1">Succinyl-CoA synthetase subunit beta</fullName>
        <shortName evidence="1">SCS-beta</shortName>
    </alternativeName>
</protein>
<keyword id="KW-0067">ATP-binding</keyword>
<keyword id="KW-0436">Ligase</keyword>
<keyword id="KW-0460">Magnesium</keyword>
<keyword id="KW-0479">Metal-binding</keyword>
<keyword id="KW-0547">Nucleotide-binding</keyword>
<keyword id="KW-1185">Reference proteome</keyword>
<keyword id="KW-0816">Tricarboxylic acid cycle</keyword>
<name>SUCC_PARXL</name>
<dbReference type="EC" id="6.2.1.5" evidence="1"/>
<dbReference type="EMBL" id="CP000270">
    <property type="protein sequence ID" value="ABE32260.1"/>
    <property type="molecule type" value="Genomic_DNA"/>
</dbReference>
<dbReference type="RefSeq" id="WP_011489752.1">
    <property type="nucleotide sequence ID" value="NC_007951.1"/>
</dbReference>
<dbReference type="SMR" id="Q13UH9"/>
<dbReference type="STRING" id="266265.Bxe_A0674"/>
<dbReference type="KEGG" id="bxb:DR64_2842"/>
<dbReference type="KEGG" id="bxe:Bxe_A0674"/>
<dbReference type="PATRIC" id="fig|266265.5.peg.3931"/>
<dbReference type="eggNOG" id="COG0045">
    <property type="taxonomic scope" value="Bacteria"/>
</dbReference>
<dbReference type="OrthoDB" id="9802602at2"/>
<dbReference type="UniPathway" id="UPA00223">
    <property type="reaction ID" value="UER00999"/>
</dbReference>
<dbReference type="Proteomes" id="UP000001817">
    <property type="component" value="Chromosome 1"/>
</dbReference>
<dbReference type="GO" id="GO:0005829">
    <property type="term" value="C:cytosol"/>
    <property type="evidence" value="ECO:0007669"/>
    <property type="project" value="TreeGrafter"/>
</dbReference>
<dbReference type="GO" id="GO:0042709">
    <property type="term" value="C:succinate-CoA ligase complex"/>
    <property type="evidence" value="ECO:0007669"/>
    <property type="project" value="TreeGrafter"/>
</dbReference>
<dbReference type="GO" id="GO:0005524">
    <property type="term" value="F:ATP binding"/>
    <property type="evidence" value="ECO:0007669"/>
    <property type="project" value="UniProtKB-UniRule"/>
</dbReference>
<dbReference type="GO" id="GO:0000287">
    <property type="term" value="F:magnesium ion binding"/>
    <property type="evidence" value="ECO:0007669"/>
    <property type="project" value="UniProtKB-UniRule"/>
</dbReference>
<dbReference type="GO" id="GO:0004775">
    <property type="term" value="F:succinate-CoA ligase (ADP-forming) activity"/>
    <property type="evidence" value="ECO:0007669"/>
    <property type="project" value="UniProtKB-UniRule"/>
</dbReference>
<dbReference type="GO" id="GO:0004776">
    <property type="term" value="F:succinate-CoA ligase (GDP-forming) activity"/>
    <property type="evidence" value="ECO:0007669"/>
    <property type="project" value="RHEA"/>
</dbReference>
<dbReference type="GO" id="GO:0006104">
    <property type="term" value="P:succinyl-CoA metabolic process"/>
    <property type="evidence" value="ECO:0007669"/>
    <property type="project" value="TreeGrafter"/>
</dbReference>
<dbReference type="GO" id="GO:0006099">
    <property type="term" value="P:tricarboxylic acid cycle"/>
    <property type="evidence" value="ECO:0007669"/>
    <property type="project" value="UniProtKB-UniRule"/>
</dbReference>
<dbReference type="FunFam" id="3.30.1490.20:FF:000002">
    <property type="entry name" value="Succinate--CoA ligase [ADP-forming] subunit beta"/>
    <property type="match status" value="1"/>
</dbReference>
<dbReference type="FunFam" id="3.30.470.20:FF:000002">
    <property type="entry name" value="Succinate--CoA ligase [ADP-forming] subunit beta"/>
    <property type="match status" value="1"/>
</dbReference>
<dbReference type="FunFam" id="3.40.50.261:FF:000001">
    <property type="entry name" value="Succinate--CoA ligase [ADP-forming] subunit beta"/>
    <property type="match status" value="1"/>
</dbReference>
<dbReference type="Gene3D" id="3.30.1490.20">
    <property type="entry name" value="ATP-grasp fold, A domain"/>
    <property type="match status" value="1"/>
</dbReference>
<dbReference type="Gene3D" id="3.30.470.20">
    <property type="entry name" value="ATP-grasp fold, B domain"/>
    <property type="match status" value="1"/>
</dbReference>
<dbReference type="Gene3D" id="3.40.50.261">
    <property type="entry name" value="Succinyl-CoA synthetase domains"/>
    <property type="match status" value="1"/>
</dbReference>
<dbReference type="HAMAP" id="MF_00558">
    <property type="entry name" value="Succ_CoA_beta"/>
    <property type="match status" value="1"/>
</dbReference>
<dbReference type="InterPro" id="IPR011761">
    <property type="entry name" value="ATP-grasp"/>
</dbReference>
<dbReference type="InterPro" id="IPR013650">
    <property type="entry name" value="ATP-grasp_succ-CoA_synth-type"/>
</dbReference>
<dbReference type="InterPro" id="IPR013815">
    <property type="entry name" value="ATP_grasp_subdomain_1"/>
</dbReference>
<dbReference type="InterPro" id="IPR017866">
    <property type="entry name" value="Succ-CoA_synthase_bsu_CS"/>
</dbReference>
<dbReference type="InterPro" id="IPR005811">
    <property type="entry name" value="SUCC_ACL_C"/>
</dbReference>
<dbReference type="InterPro" id="IPR005809">
    <property type="entry name" value="Succ_CoA_ligase-like_bsu"/>
</dbReference>
<dbReference type="InterPro" id="IPR016102">
    <property type="entry name" value="Succinyl-CoA_synth-like"/>
</dbReference>
<dbReference type="NCBIfam" id="NF001913">
    <property type="entry name" value="PRK00696.1"/>
    <property type="match status" value="1"/>
</dbReference>
<dbReference type="NCBIfam" id="TIGR01016">
    <property type="entry name" value="sucCoAbeta"/>
    <property type="match status" value="1"/>
</dbReference>
<dbReference type="PANTHER" id="PTHR11815:SF10">
    <property type="entry name" value="SUCCINATE--COA LIGASE [GDP-FORMING] SUBUNIT BETA, MITOCHONDRIAL"/>
    <property type="match status" value="1"/>
</dbReference>
<dbReference type="PANTHER" id="PTHR11815">
    <property type="entry name" value="SUCCINYL-COA SYNTHETASE BETA CHAIN"/>
    <property type="match status" value="1"/>
</dbReference>
<dbReference type="Pfam" id="PF08442">
    <property type="entry name" value="ATP-grasp_2"/>
    <property type="match status" value="1"/>
</dbReference>
<dbReference type="Pfam" id="PF00549">
    <property type="entry name" value="Ligase_CoA"/>
    <property type="match status" value="1"/>
</dbReference>
<dbReference type="PIRSF" id="PIRSF001554">
    <property type="entry name" value="SucCS_beta"/>
    <property type="match status" value="1"/>
</dbReference>
<dbReference type="SUPFAM" id="SSF56059">
    <property type="entry name" value="Glutathione synthetase ATP-binding domain-like"/>
    <property type="match status" value="1"/>
</dbReference>
<dbReference type="SUPFAM" id="SSF52210">
    <property type="entry name" value="Succinyl-CoA synthetase domains"/>
    <property type="match status" value="1"/>
</dbReference>
<dbReference type="PROSITE" id="PS50975">
    <property type="entry name" value="ATP_GRASP"/>
    <property type="match status" value="1"/>
</dbReference>
<dbReference type="PROSITE" id="PS01217">
    <property type="entry name" value="SUCCINYL_COA_LIG_3"/>
    <property type="match status" value="1"/>
</dbReference>
<sequence length="389" mass="41227">MKIHEYQGKEILRKFGVAVPRGKPVFSVDDAVKAAEELGGPVWVVKAQIHAGGRGKGGGVKVAKSLEQVREYANQILGMQLVTHQTGPEGQKVNRLLIEEGADIKKELYVGLVIDRVSQKIVVMASSEGGMDVEEVAEKTPELIHKIAVDPATGLKDAEADELATKIGVPAASLPQARAILQGLYKAFWETDASLAEINPLILTGDGKVIALDAKFNFDSNALFRHPEIVAYRDLDEEDPAEVEASKFDLAYISLDGNIGCLVNGAGLAMATMDTIKLFGGEPANFLDVGGGATTEKVTEAFKIMLKNPNLTAILVNIFGGIMRCDVIAEGVIAASKAVSLKVPLVVRMKGTNEDLGKKMLAESGLPIIAADSMEEAAQKVVAAASGKA</sequence>
<accession>Q13UH9</accession>
<reference key="1">
    <citation type="journal article" date="2006" name="Proc. Natl. Acad. Sci. U.S.A.">
        <title>Burkholderia xenovorans LB400 harbors a multi-replicon, 9.73-Mbp genome shaped for versatility.</title>
        <authorList>
            <person name="Chain P.S.G."/>
            <person name="Denef V.J."/>
            <person name="Konstantinidis K.T."/>
            <person name="Vergez L.M."/>
            <person name="Agullo L."/>
            <person name="Reyes V.L."/>
            <person name="Hauser L."/>
            <person name="Cordova M."/>
            <person name="Gomez L."/>
            <person name="Gonzalez M."/>
            <person name="Land M."/>
            <person name="Lao V."/>
            <person name="Larimer F."/>
            <person name="LiPuma J.J."/>
            <person name="Mahenthiralingam E."/>
            <person name="Malfatti S.A."/>
            <person name="Marx C.J."/>
            <person name="Parnell J.J."/>
            <person name="Ramette A."/>
            <person name="Richardson P."/>
            <person name="Seeger M."/>
            <person name="Smith D."/>
            <person name="Spilker T."/>
            <person name="Sul W.J."/>
            <person name="Tsoi T.V."/>
            <person name="Ulrich L.E."/>
            <person name="Zhulin I.B."/>
            <person name="Tiedje J.M."/>
        </authorList>
    </citation>
    <scope>NUCLEOTIDE SEQUENCE [LARGE SCALE GENOMIC DNA]</scope>
    <source>
        <strain>LB400</strain>
    </source>
</reference>
<proteinExistence type="inferred from homology"/>
<organism>
    <name type="scientific">Paraburkholderia xenovorans (strain LB400)</name>
    <dbReference type="NCBI Taxonomy" id="266265"/>
    <lineage>
        <taxon>Bacteria</taxon>
        <taxon>Pseudomonadati</taxon>
        <taxon>Pseudomonadota</taxon>
        <taxon>Betaproteobacteria</taxon>
        <taxon>Burkholderiales</taxon>
        <taxon>Burkholderiaceae</taxon>
        <taxon>Paraburkholderia</taxon>
    </lineage>
</organism>
<evidence type="ECO:0000255" key="1">
    <source>
        <dbReference type="HAMAP-Rule" id="MF_00558"/>
    </source>
</evidence>